<accession>Q6CNM6</accession>
<keyword id="KW-0227">DNA damage</keyword>
<keyword id="KW-0233">DNA recombination</keyword>
<keyword id="KW-0234">DNA repair</keyword>
<keyword id="KW-0255">Endonuclease</keyword>
<keyword id="KW-0378">Hydrolase</keyword>
<keyword id="KW-0460">Magnesium</keyword>
<keyword id="KW-0469">Meiosis</keyword>
<keyword id="KW-0479">Metal-binding</keyword>
<keyword id="KW-0540">Nuclease</keyword>
<keyword id="KW-0539">Nucleus</keyword>
<keyword id="KW-1185">Reference proteome</keyword>
<comment type="function">
    <text evidence="1">Interacts with MUS81 to form a DNA structure-specific endonuclease with substrate preference for branched DNA structures with a 5'-end at the branch nick. Typical substrates include 3'-flap structures, D-loops, replication forks and nicked Holliday junctions. May be required in mitosis for the processing of stalled or collapsed replication fork intermediates. May be required in meiosis for the repair of meiosis-specific double strand breaks subsequent to single-end invasion (SEI) (By similarity).</text>
</comment>
<comment type="cofactor">
    <cofactor evidence="1">
        <name>Mg(2+)</name>
        <dbReference type="ChEBI" id="CHEBI:18420"/>
    </cofactor>
</comment>
<comment type="subunit">
    <text evidence="1">Interacts with MUS81.</text>
</comment>
<comment type="subcellular location">
    <subcellularLocation>
        <location evidence="1">Nucleus</location>
    </subcellularLocation>
</comment>
<comment type="similarity">
    <text evidence="3">Belongs to the EME1/MMS4 family.</text>
</comment>
<name>EME1_KLULA</name>
<dbReference type="EC" id="3.1.22.-"/>
<dbReference type="EMBL" id="CR382125">
    <property type="protein sequence ID" value="CAG99550.1"/>
    <property type="molecule type" value="Genomic_DNA"/>
</dbReference>
<dbReference type="RefSeq" id="XP_454463.1">
    <property type="nucleotide sequence ID" value="XM_454463.1"/>
</dbReference>
<dbReference type="FunCoup" id="Q6CNM6">
    <property type="interactions" value="211"/>
</dbReference>
<dbReference type="STRING" id="284590.Q6CNM6"/>
<dbReference type="PaxDb" id="284590-Q6CNM6"/>
<dbReference type="KEGG" id="kla:KLLA0_E11397g"/>
<dbReference type="eggNOG" id="ENOG502RY0Q">
    <property type="taxonomic scope" value="Eukaryota"/>
</dbReference>
<dbReference type="HOGENOM" id="CLU_023637_0_0_1"/>
<dbReference type="InParanoid" id="Q6CNM6"/>
<dbReference type="OMA" id="TICSEHE"/>
<dbReference type="Proteomes" id="UP000000598">
    <property type="component" value="Chromosome E"/>
</dbReference>
<dbReference type="GO" id="GO:0005634">
    <property type="term" value="C:nucleus"/>
    <property type="evidence" value="ECO:0007669"/>
    <property type="project" value="UniProtKB-SubCell"/>
</dbReference>
<dbReference type="GO" id="GO:0003677">
    <property type="term" value="F:DNA binding"/>
    <property type="evidence" value="ECO:0007669"/>
    <property type="project" value="InterPro"/>
</dbReference>
<dbReference type="GO" id="GO:0004519">
    <property type="term" value="F:endonuclease activity"/>
    <property type="evidence" value="ECO:0007669"/>
    <property type="project" value="UniProtKB-KW"/>
</dbReference>
<dbReference type="GO" id="GO:0046872">
    <property type="term" value="F:metal ion binding"/>
    <property type="evidence" value="ECO:0007669"/>
    <property type="project" value="UniProtKB-KW"/>
</dbReference>
<dbReference type="GO" id="GO:0006310">
    <property type="term" value="P:DNA recombination"/>
    <property type="evidence" value="ECO:0007669"/>
    <property type="project" value="UniProtKB-KW"/>
</dbReference>
<dbReference type="GO" id="GO:0006281">
    <property type="term" value="P:DNA repair"/>
    <property type="evidence" value="ECO:0007669"/>
    <property type="project" value="UniProtKB-KW"/>
</dbReference>
<dbReference type="GO" id="GO:0061982">
    <property type="term" value="P:meiosis I cell cycle process"/>
    <property type="evidence" value="ECO:0007669"/>
    <property type="project" value="UniProtKB-ARBA"/>
</dbReference>
<dbReference type="CDD" id="cd20085">
    <property type="entry name" value="XPF_nuclease_Mms4"/>
    <property type="match status" value="1"/>
</dbReference>
<dbReference type="InterPro" id="IPR006166">
    <property type="entry name" value="ERCC4_domain"/>
</dbReference>
<dbReference type="InterPro" id="IPR047521">
    <property type="entry name" value="XPF_nuclease_EME1_ascomycetes"/>
</dbReference>
<dbReference type="Pfam" id="PF02732">
    <property type="entry name" value="ERCC4"/>
    <property type="match status" value="1"/>
</dbReference>
<dbReference type="SMART" id="SM00891">
    <property type="entry name" value="ERCC4"/>
    <property type="match status" value="1"/>
</dbReference>
<reference key="1">
    <citation type="journal article" date="2004" name="Nature">
        <title>Genome evolution in yeasts.</title>
        <authorList>
            <person name="Dujon B."/>
            <person name="Sherman D."/>
            <person name="Fischer G."/>
            <person name="Durrens P."/>
            <person name="Casaregola S."/>
            <person name="Lafontaine I."/>
            <person name="de Montigny J."/>
            <person name="Marck C."/>
            <person name="Neuveglise C."/>
            <person name="Talla E."/>
            <person name="Goffard N."/>
            <person name="Frangeul L."/>
            <person name="Aigle M."/>
            <person name="Anthouard V."/>
            <person name="Babour A."/>
            <person name="Barbe V."/>
            <person name="Barnay S."/>
            <person name="Blanchin S."/>
            <person name="Beckerich J.-M."/>
            <person name="Beyne E."/>
            <person name="Bleykasten C."/>
            <person name="Boisrame A."/>
            <person name="Boyer J."/>
            <person name="Cattolico L."/>
            <person name="Confanioleri F."/>
            <person name="de Daruvar A."/>
            <person name="Despons L."/>
            <person name="Fabre E."/>
            <person name="Fairhead C."/>
            <person name="Ferry-Dumazet H."/>
            <person name="Groppi A."/>
            <person name="Hantraye F."/>
            <person name="Hennequin C."/>
            <person name="Jauniaux N."/>
            <person name="Joyet P."/>
            <person name="Kachouri R."/>
            <person name="Kerrest A."/>
            <person name="Koszul R."/>
            <person name="Lemaire M."/>
            <person name="Lesur I."/>
            <person name="Ma L."/>
            <person name="Muller H."/>
            <person name="Nicaud J.-M."/>
            <person name="Nikolski M."/>
            <person name="Oztas S."/>
            <person name="Ozier-Kalogeropoulos O."/>
            <person name="Pellenz S."/>
            <person name="Potier S."/>
            <person name="Richard G.-F."/>
            <person name="Straub M.-L."/>
            <person name="Suleau A."/>
            <person name="Swennen D."/>
            <person name="Tekaia F."/>
            <person name="Wesolowski-Louvel M."/>
            <person name="Westhof E."/>
            <person name="Wirth B."/>
            <person name="Zeniou-Meyer M."/>
            <person name="Zivanovic Y."/>
            <person name="Bolotin-Fukuhara M."/>
            <person name="Thierry A."/>
            <person name="Bouchier C."/>
            <person name="Caudron B."/>
            <person name="Scarpelli C."/>
            <person name="Gaillardin C."/>
            <person name="Weissenbach J."/>
            <person name="Wincker P."/>
            <person name="Souciet J.-L."/>
        </authorList>
    </citation>
    <scope>NUCLEOTIDE SEQUENCE [LARGE SCALE GENOMIC DNA]</scope>
    <source>
        <strain>ATCC 8585 / CBS 2359 / DSM 70799 / NBRC 1267 / NRRL Y-1140 / WM37</strain>
    </source>
</reference>
<gene>
    <name type="primary">EME1</name>
    <name type="ordered locus">KLLA0E11363g</name>
</gene>
<evidence type="ECO:0000250" key="1"/>
<evidence type="ECO:0000256" key="2">
    <source>
        <dbReference type="SAM" id="MobiDB-lite"/>
    </source>
</evidence>
<evidence type="ECO:0000305" key="3"/>
<sequence length="690" mass="79008">MDEVNIIDINDTTEQSLVGNEGTANGVVVLISSEGEREGPPASDPIHYSLARSLSDSVGQRNVEDDDVVLLENSVSVSFSLEVEGRFQNDTAIESDNEPASQPQTQTFKRSQSRLLDEIENSGLSISALSDDEEASPLVSNQRSVIHKNIESEVKSGKYIIPLPQSSPLEKMSQVFNYQLASSPTPNKSPSSRSTLPVKSPLQLSTTVANKRSYREVQPPKFDPYLTRKLKKPQNKATADVSSVALDLTKYMEDCHDLYGTLVSDTHIRQQRSLDTKTNSYHSESNYEHDSIVIESDEDDDITNTRQEKPLFVQHSSQSTPVSSNKLALRQPRHVEDEKIDKVKPMVNARPFTDQEYSEMVKKCLGTSEMRKLYNECNKVSRTEETIYNEMILTVNNKVMELIHSKHISFEEELKPLTIIQNYEEFPIIRFKRKCRSIYDQTHGVFYPCDEVIANESICVLVYEALPFFHRYRTDKRGLWDEIRQFSKNGMKVIVVMYGLNALRKKLCNMENRQHEDRVLEQLSGSASSQSQSKTRRRSTQETKMRELNIKSKNLDRIINEVTIYANVDVFPIENLNEFSHWMKNLVWVVGKMRYDVSVKYKEWSHLNVKSGKSPTDVLYSFLQQVAHVNEPKAKRVVTHYKSFQSMMNDMKAGYVAQSHDNKPLMPKSLERALHTLYTSDDPNELIFTD</sequence>
<proteinExistence type="inferred from homology"/>
<protein>
    <recommendedName>
        <fullName>Crossover junction endonuclease EME1</fullName>
        <ecNumber>3.1.22.-</ecNumber>
    </recommendedName>
</protein>
<organism>
    <name type="scientific">Kluyveromyces lactis (strain ATCC 8585 / CBS 2359 / DSM 70799 / NBRC 1267 / NRRL Y-1140 / WM37)</name>
    <name type="common">Yeast</name>
    <name type="synonym">Candida sphaerica</name>
    <dbReference type="NCBI Taxonomy" id="284590"/>
    <lineage>
        <taxon>Eukaryota</taxon>
        <taxon>Fungi</taxon>
        <taxon>Dikarya</taxon>
        <taxon>Ascomycota</taxon>
        <taxon>Saccharomycotina</taxon>
        <taxon>Saccharomycetes</taxon>
        <taxon>Saccharomycetales</taxon>
        <taxon>Saccharomycetaceae</taxon>
        <taxon>Kluyveromyces</taxon>
    </lineage>
</organism>
<feature type="chain" id="PRO_0000223635" description="Crossover junction endonuclease EME1">
    <location>
        <begin position="1"/>
        <end position="690"/>
    </location>
</feature>
<feature type="region of interest" description="Disordered" evidence="2">
    <location>
        <begin position="181"/>
        <end position="216"/>
    </location>
</feature>
<feature type="region of interest" description="Disordered" evidence="2">
    <location>
        <begin position="521"/>
        <end position="543"/>
    </location>
</feature>
<feature type="compositionally biased region" description="Polar residues" evidence="2">
    <location>
        <begin position="181"/>
        <end position="210"/>
    </location>
</feature>
<feature type="compositionally biased region" description="Low complexity" evidence="2">
    <location>
        <begin position="524"/>
        <end position="533"/>
    </location>
</feature>